<feature type="chain" id="PRO_0000131655" description="Small ribosomal subunit protein uS5">
    <location>
        <begin position="1"/>
        <end position="236"/>
    </location>
</feature>
<feature type="domain" description="S5 DRBM" evidence="1">
    <location>
        <begin position="61"/>
        <end position="124"/>
    </location>
</feature>
<feature type="helix" evidence="4">
    <location>
        <begin position="3"/>
        <end position="14"/>
    </location>
</feature>
<feature type="helix" evidence="4">
    <location>
        <begin position="21"/>
        <end position="27"/>
    </location>
</feature>
<feature type="helix" evidence="4">
    <location>
        <begin position="34"/>
        <end position="37"/>
    </location>
</feature>
<feature type="strand" evidence="4">
    <location>
        <begin position="38"/>
        <end position="40"/>
    </location>
</feature>
<feature type="helix" evidence="4">
    <location>
        <begin position="48"/>
        <end position="53"/>
    </location>
</feature>
<feature type="helix" evidence="4">
    <location>
        <begin position="55"/>
        <end position="58"/>
    </location>
</feature>
<feature type="helix" evidence="4">
    <location>
        <begin position="60"/>
        <end position="62"/>
    </location>
</feature>
<feature type="strand" evidence="4">
    <location>
        <begin position="63"/>
        <end position="75"/>
    </location>
</feature>
<feature type="strand" evidence="4">
    <location>
        <begin position="78"/>
        <end position="90"/>
    </location>
</feature>
<feature type="strand" evidence="4">
    <location>
        <begin position="92"/>
        <end position="105"/>
    </location>
</feature>
<feature type="helix" evidence="4">
    <location>
        <begin position="106"/>
        <end position="119"/>
    </location>
</feature>
<feature type="strand" evidence="3">
    <location>
        <begin position="121"/>
        <end position="123"/>
    </location>
</feature>
<feature type="strand" evidence="4">
    <location>
        <begin position="125"/>
        <end position="127"/>
    </location>
</feature>
<feature type="strand" evidence="4">
    <location>
        <begin position="138"/>
        <end position="140"/>
    </location>
</feature>
<feature type="strand" evidence="4">
    <location>
        <begin position="145"/>
        <end position="149"/>
    </location>
</feature>
<feature type="strand" evidence="4">
    <location>
        <begin position="152"/>
        <end position="157"/>
    </location>
</feature>
<feature type="helix" evidence="4">
    <location>
        <begin position="169"/>
        <end position="178"/>
    </location>
</feature>
<feature type="strand" evidence="4">
    <location>
        <begin position="183"/>
        <end position="189"/>
    </location>
</feature>
<feature type="helix" evidence="4">
    <location>
        <begin position="194"/>
        <end position="206"/>
    </location>
</feature>
<feature type="helix" evidence="4">
    <location>
        <begin position="207"/>
        <end position="209"/>
    </location>
</feature>
<feature type="helix" evidence="4">
    <location>
        <begin position="215"/>
        <end position="221"/>
    </location>
</feature>
<feature type="strand" evidence="4">
    <location>
        <begin position="224"/>
        <end position="227"/>
    </location>
</feature>
<name>RS5_PYRAB</name>
<proteinExistence type="evidence at protein level"/>
<keyword id="KW-0002">3D-structure</keyword>
<keyword id="KW-0687">Ribonucleoprotein</keyword>
<keyword id="KW-0689">Ribosomal protein</keyword>
<keyword id="KW-0694">RNA-binding</keyword>
<keyword id="KW-0699">rRNA-binding</keyword>
<comment type="function">
    <text evidence="1">With S4 and S12 plays an important role in translational accuracy.</text>
</comment>
<comment type="subunit">
    <text evidence="1">Part of the 30S ribosomal subunit. Contacts protein S4.</text>
</comment>
<comment type="domain">
    <text>The N-terminal domain interacts with the head of the 30S subunit; the C-terminal domain interacts with the body and contacts protein S4. The interaction surface between S4 and S5 is involved in control of translational fidelity.</text>
</comment>
<comment type="similarity">
    <text evidence="1">Belongs to the universal ribosomal protein uS5 family.</text>
</comment>
<organism>
    <name type="scientific">Pyrococcus abyssi (strain GE5 / Orsay)</name>
    <dbReference type="NCBI Taxonomy" id="272844"/>
    <lineage>
        <taxon>Archaea</taxon>
        <taxon>Methanobacteriati</taxon>
        <taxon>Methanobacteriota</taxon>
        <taxon>Thermococci</taxon>
        <taxon>Thermococcales</taxon>
        <taxon>Thermococcaceae</taxon>
        <taxon>Pyrococcus</taxon>
    </lineage>
</organism>
<accession>Q9V1V5</accession>
<accession>G8ZHV5</accession>
<dbReference type="EMBL" id="AJ248284">
    <property type="protein sequence ID" value="CAB49243.1"/>
    <property type="molecule type" value="Genomic_DNA"/>
</dbReference>
<dbReference type="EMBL" id="HE613800">
    <property type="protein sequence ID" value="CCE69698.1"/>
    <property type="molecule type" value="Genomic_DNA"/>
</dbReference>
<dbReference type="PIR" id="D75145">
    <property type="entry name" value="D75145"/>
</dbReference>
<dbReference type="RefSeq" id="WP_010867443.1">
    <property type="nucleotide sequence ID" value="NC_000868.1"/>
</dbReference>
<dbReference type="PDB" id="6SW9">
    <property type="method" value="EM"/>
    <property type="resolution" value="4.20 A"/>
    <property type="chains" value="F=1-236"/>
</dbReference>
<dbReference type="PDB" id="6SWC">
    <property type="method" value="EM"/>
    <property type="resolution" value="3.30 A"/>
    <property type="chains" value="F=1-236"/>
</dbReference>
<dbReference type="PDB" id="6SWD">
    <property type="method" value="EM"/>
    <property type="resolution" value="3.20 A"/>
    <property type="chains" value="F=1-236"/>
</dbReference>
<dbReference type="PDB" id="7ZAG">
    <property type="method" value="EM"/>
    <property type="resolution" value="2.77 A"/>
    <property type="chains" value="F=1-236"/>
</dbReference>
<dbReference type="PDB" id="7ZAH">
    <property type="method" value="EM"/>
    <property type="resolution" value="2.70 A"/>
    <property type="chains" value="F=1-236"/>
</dbReference>
<dbReference type="PDB" id="7ZAI">
    <property type="method" value="EM"/>
    <property type="resolution" value="2.60 A"/>
    <property type="chains" value="F=1-236"/>
</dbReference>
<dbReference type="PDB" id="7ZHG">
    <property type="method" value="EM"/>
    <property type="resolution" value="2.25 A"/>
    <property type="chains" value="F=1-236"/>
</dbReference>
<dbReference type="PDBsum" id="6SW9"/>
<dbReference type="PDBsum" id="6SWC"/>
<dbReference type="PDBsum" id="6SWD"/>
<dbReference type="PDBsum" id="7ZAG"/>
<dbReference type="PDBsum" id="7ZAH"/>
<dbReference type="PDBsum" id="7ZAI"/>
<dbReference type="PDBsum" id="7ZHG"/>
<dbReference type="EMDB" id="EMD-10320"/>
<dbReference type="EMDB" id="EMD-10322"/>
<dbReference type="EMDB" id="EMD-10323"/>
<dbReference type="EMDB" id="EMD-14579"/>
<dbReference type="EMDB" id="EMD-14580"/>
<dbReference type="EMDB" id="EMD-14581"/>
<dbReference type="EMDB" id="EMD-14731"/>
<dbReference type="EMDB" id="EMD-8148"/>
<dbReference type="SMR" id="Q9V1V5"/>
<dbReference type="STRING" id="272844.PAB2136"/>
<dbReference type="KEGG" id="pab:PAB2136"/>
<dbReference type="PATRIC" id="fig|272844.11.peg.342"/>
<dbReference type="eggNOG" id="arCOG04087">
    <property type="taxonomic scope" value="Archaea"/>
</dbReference>
<dbReference type="HOGENOM" id="CLU_065898_0_1_2"/>
<dbReference type="OrthoDB" id="38155at2157"/>
<dbReference type="PhylomeDB" id="Q9V1V5"/>
<dbReference type="Proteomes" id="UP000000810">
    <property type="component" value="Chromosome"/>
</dbReference>
<dbReference type="Proteomes" id="UP000009139">
    <property type="component" value="Chromosome"/>
</dbReference>
<dbReference type="GO" id="GO:0022627">
    <property type="term" value="C:cytosolic small ribosomal subunit"/>
    <property type="evidence" value="ECO:0007669"/>
    <property type="project" value="TreeGrafter"/>
</dbReference>
<dbReference type="GO" id="GO:0019843">
    <property type="term" value="F:rRNA binding"/>
    <property type="evidence" value="ECO:0007669"/>
    <property type="project" value="UniProtKB-UniRule"/>
</dbReference>
<dbReference type="GO" id="GO:0003735">
    <property type="term" value="F:structural constituent of ribosome"/>
    <property type="evidence" value="ECO:0007669"/>
    <property type="project" value="InterPro"/>
</dbReference>
<dbReference type="GO" id="GO:0006412">
    <property type="term" value="P:translation"/>
    <property type="evidence" value="ECO:0007669"/>
    <property type="project" value="UniProtKB-UniRule"/>
</dbReference>
<dbReference type="FunFam" id="3.30.160.20:FF:000002">
    <property type="entry name" value="40S ribosomal protein S2"/>
    <property type="match status" value="1"/>
</dbReference>
<dbReference type="FunFam" id="3.30.230.10:FF:000004">
    <property type="entry name" value="40S ribosomal protein S2"/>
    <property type="match status" value="1"/>
</dbReference>
<dbReference type="Gene3D" id="3.30.160.20">
    <property type="match status" value="1"/>
</dbReference>
<dbReference type="Gene3D" id="3.30.230.10">
    <property type="match status" value="1"/>
</dbReference>
<dbReference type="HAMAP" id="MF_01307_A">
    <property type="entry name" value="Ribosomal_uS5_A"/>
    <property type="match status" value="1"/>
</dbReference>
<dbReference type="InterPro" id="IPR020568">
    <property type="entry name" value="Ribosomal_Su5_D2-typ_SF"/>
</dbReference>
<dbReference type="InterPro" id="IPR000851">
    <property type="entry name" value="Ribosomal_uS5"/>
</dbReference>
<dbReference type="InterPro" id="IPR047866">
    <property type="entry name" value="Ribosomal_uS5_arc"/>
</dbReference>
<dbReference type="InterPro" id="IPR005324">
    <property type="entry name" value="Ribosomal_uS5_C"/>
</dbReference>
<dbReference type="InterPro" id="IPR005711">
    <property type="entry name" value="Ribosomal_uS5_euk/arc"/>
</dbReference>
<dbReference type="InterPro" id="IPR013810">
    <property type="entry name" value="Ribosomal_uS5_N"/>
</dbReference>
<dbReference type="InterPro" id="IPR018192">
    <property type="entry name" value="Ribosomal_uS5_N_CS"/>
</dbReference>
<dbReference type="InterPro" id="IPR014721">
    <property type="entry name" value="Ribsml_uS5_D2-typ_fold_subgr"/>
</dbReference>
<dbReference type="NCBIfam" id="NF003125">
    <property type="entry name" value="PRK04044.1"/>
    <property type="match status" value="1"/>
</dbReference>
<dbReference type="NCBIfam" id="TIGR01020">
    <property type="entry name" value="uS5_euk_arch"/>
    <property type="match status" value="1"/>
</dbReference>
<dbReference type="PANTHER" id="PTHR13718:SF4">
    <property type="entry name" value="40S RIBOSOMAL PROTEIN S2"/>
    <property type="match status" value="1"/>
</dbReference>
<dbReference type="PANTHER" id="PTHR13718">
    <property type="entry name" value="RIBOSOMAL S SUBUNIT"/>
    <property type="match status" value="1"/>
</dbReference>
<dbReference type="Pfam" id="PF00333">
    <property type="entry name" value="Ribosomal_S5"/>
    <property type="match status" value="1"/>
</dbReference>
<dbReference type="Pfam" id="PF03719">
    <property type="entry name" value="Ribosomal_S5_C"/>
    <property type="match status" value="1"/>
</dbReference>
<dbReference type="SUPFAM" id="SSF54768">
    <property type="entry name" value="dsRNA-binding domain-like"/>
    <property type="match status" value="1"/>
</dbReference>
<dbReference type="SUPFAM" id="SSF54211">
    <property type="entry name" value="Ribosomal protein S5 domain 2-like"/>
    <property type="match status" value="1"/>
</dbReference>
<dbReference type="PROSITE" id="PS00585">
    <property type="entry name" value="RIBOSOMAL_S5"/>
    <property type="match status" value="1"/>
</dbReference>
<dbReference type="PROSITE" id="PS50881">
    <property type="entry name" value="S5_DSRBD"/>
    <property type="match status" value="1"/>
</dbReference>
<evidence type="ECO:0000255" key="1">
    <source>
        <dbReference type="HAMAP-Rule" id="MF_01307"/>
    </source>
</evidence>
<evidence type="ECO:0000305" key="2"/>
<evidence type="ECO:0007829" key="3">
    <source>
        <dbReference type="PDB" id="6SWD"/>
    </source>
</evidence>
<evidence type="ECO:0007829" key="4">
    <source>
        <dbReference type="PDB" id="7ZHG"/>
    </source>
</evidence>
<gene>
    <name evidence="1" type="primary">rps5</name>
    <name type="ordered locus">PYRAB03210</name>
    <name type="ORF">PAB2136</name>
</gene>
<sequence length="236" mass="26484">MSQEWKEYAKRVLDEWQPKTKLGMLVKEGQITDIHEIFRKGYQIKEPEIIDVLLPEVNARENQEILDIALTVRMTDSGRRVRFRVLAAVGNRDGYVGLGIGHGREVGIAIRKAINYAKLNIIEIKRGCGSWECRCRRPHSVPFTVEGKEGSVRVKLIPGPRGLGLVIGDVGKKILRLAGIQDVWSQTLGETRTTVNFAKAVFNALYNTNKVVVTPEMIERYGIVVGRAMPASFTLE</sequence>
<reference key="1">
    <citation type="journal article" date="2003" name="Mol. Microbiol.">
        <title>An integrated analysis of the genome of the hyperthermophilic archaeon Pyrococcus abyssi.</title>
        <authorList>
            <person name="Cohen G.N."/>
            <person name="Barbe V."/>
            <person name="Flament D."/>
            <person name="Galperin M."/>
            <person name="Heilig R."/>
            <person name="Lecompte O."/>
            <person name="Poch O."/>
            <person name="Prieur D."/>
            <person name="Querellou J."/>
            <person name="Ripp R."/>
            <person name="Thierry J.-C."/>
            <person name="Van der Oost J."/>
            <person name="Weissenbach J."/>
            <person name="Zivanovic Y."/>
            <person name="Forterre P."/>
        </authorList>
    </citation>
    <scope>NUCLEOTIDE SEQUENCE [LARGE SCALE GENOMIC DNA]</scope>
    <source>
        <strain>GE5 / Orsay</strain>
    </source>
</reference>
<reference key="2">
    <citation type="journal article" date="2012" name="Curr. Microbiol.">
        <title>Re-annotation of two hyperthermophilic archaea Pyrococcus abyssi GE5 and Pyrococcus furiosus DSM 3638.</title>
        <authorList>
            <person name="Gao J."/>
            <person name="Wang J."/>
        </authorList>
    </citation>
    <scope>GENOME REANNOTATION</scope>
    <source>
        <strain>GE5 / Orsay</strain>
    </source>
</reference>
<protein>
    <recommendedName>
        <fullName evidence="1">Small ribosomal subunit protein uS5</fullName>
    </recommendedName>
    <alternativeName>
        <fullName evidence="2">30S ribosomal protein S5</fullName>
    </alternativeName>
</protein>